<evidence type="ECO:0000255" key="1">
    <source>
        <dbReference type="HAMAP-Rule" id="MF_03154"/>
    </source>
</evidence>
<evidence type="ECO:0000305" key="2"/>
<feature type="chain" id="PRO_0000414366" description="Acireductone dioxygenase">
    <location>
        <begin position="1"/>
        <end position="176"/>
    </location>
</feature>
<feature type="binding site" evidence="1">
    <location>
        <position position="81"/>
    </location>
    <ligand>
        <name>Fe(2+)</name>
        <dbReference type="ChEBI" id="CHEBI:29033"/>
        <note>for iron-dependent acireductone dioxygenase activity</note>
    </ligand>
</feature>
<feature type="binding site" evidence="1">
    <location>
        <position position="81"/>
    </location>
    <ligand>
        <name>Ni(2+)</name>
        <dbReference type="ChEBI" id="CHEBI:49786"/>
        <note>for nickel-dependent acireductone dioxygenase activity</note>
    </ligand>
</feature>
<feature type="binding site" evidence="1">
    <location>
        <position position="83"/>
    </location>
    <ligand>
        <name>Fe(2+)</name>
        <dbReference type="ChEBI" id="CHEBI:29033"/>
        <note>for iron-dependent acireductone dioxygenase activity</note>
    </ligand>
</feature>
<feature type="binding site" evidence="1">
    <location>
        <position position="83"/>
    </location>
    <ligand>
        <name>Ni(2+)</name>
        <dbReference type="ChEBI" id="CHEBI:49786"/>
        <note>for nickel-dependent acireductone dioxygenase activity</note>
    </ligand>
</feature>
<feature type="binding site" evidence="1">
    <location>
        <position position="87"/>
    </location>
    <ligand>
        <name>Fe(2+)</name>
        <dbReference type="ChEBI" id="CHEBI:29033"/>
        <note>for iron-dependent acireductone dioxygenase activity</note>
    </ligand>
</feature>
<feature type="binding site" evidence="1">
    <location>
        <position position="87"/>
    </location>
    <ligand>
        <name>Ni(2+)</name>
        <dbReference type="ChEBI" id="CHEBI:49786"/>
        <note>for nickel-dependent acireductone dioxygenase activity</note>
    </ligand>
</feature>
<feature type="binding site" evidence="1">
    <location>
        <position position="126"/>
    </location>
    <ligand>
        <name>Fe(2+)</name>
        <dbReference type="ChEBI" id="CHEBI:29033"/>
        <note>for iron-dependent acireductone dioxygenase activity</note>
    </ligand>
</feature>
<feature type="binding site" evidence="1">
    <location>
        <position position="126"/>
    </location>
    <ligand>
        <name>Ni(2+)</name>
        <dbReference type="ChEBI" id="CHEBI:49786"/>
        <note>for nickel-dependent acireductone dioxygenase activity</note>
    </ligand>
</feature>
<reference key="1">
    <citation type="journal article" date="2011" name="PLoS Genet.">
        <title>Genomic analysis of the necrotrophic fungal pathogens Sclerotinia sclerotiorum and Botrytis cinerea.</title>
        <authorList>
            <person name="Amselem J."/>
            <person name="Cuomo C.A."/>
            <person name="van Kan J.A.L."/>
            <person name="Viaud M."/>
            <person name="Benito E.P."/>
            <person name="Couloux A."/>
            <person name="Coutinho P.M."/>
            <person name="de Vries R.P."/>
            <person name="Dyer P.S."/>
            <person name="Fillinger S."/>
            <person name="Fournier E."/>
            <person name="Gout L."/>
            <person name="Hahn M."/>
            <person name="Kohn L."/>
            <person name="Lapalu N."/>
            <person name="Plummer K.M."/>
            <person name="Pradier J.-M."/>
            <person name="Quevillon E."/>
            <person name="Sharon A."/>
            <person name="Simon A."/>
            <person name="ten Have A."/>
            <person name="Tudzynski B."/>
            <person name="Tudzynski P."/>
            <person name="Wincker P."/>
            <person name="Andrew M."/>
            <person name="Anthouard V."/>
            <person name="Beever R.E."/>
            <person name="Beffa R."/>
            <person name="Benoit I."/>
            <person name="Bouzid O."/>
            <person name="Brault B."/>
            <person name="Chen Z."/>
            <person name="Choquer M."/>
            <person name="Collemare J."/>
            <person name="Cotton P."/>
            <person name="Danchin E.G."/>
            <person name="Da Silva C."/>
            <person name="Gautier A."/>
            <person name="Giraud C."/>
            <person name="Giraud T."/>
            <person name="Gonzalez C."/>
            <person name="Grossetete S."/>
            <person name="Gueldener U."/>
            <person name="Henrissat B."/>
            <person name="Howlett B.J."/>
            <person name="Kodira C."/>
            <person name="Kretschmer M."/>
            <person name="Lappartient A."/>
            <person name="Leroch M."/>
            <person name="Levis C."/>
            <person name="Mauceli E."/>
            <person name="Neuveglise C."/>
            <person name="Oeser B."/>
            <person name="Pearson M."/>
            <person name="Poulain J."/>
            <person name="Poussereau N."/>
            <person name="Quesneville H."/>
            <person name="Rascle C."/>
            <person name="Schumacher J."/>
            <person name="Segurens B."/>
            <person name="Sexton A."/>
            <person name="Silva E."/>
            <person name="Sirven C."/>
            <person name="Soanes D.M."/>
            <person name="Talbot N.J."/>
            <person name="Templeton M."/>
            <person name="Yandava C."/>
            <person name="Yarden O."/>
            <person name="Zeng Q."/>
            <person name="Rollins J.A."/>
            <person name="Lebrun M.-H."/>
            <person name="Dickman M."/>
        </authorList>
    </citation>
    <scope>NUCLEOTIDE SEQUENCE [LARGE SCALE GENOMIC DNA]</scope>
    <source>
        <strain>ATCC 18683 / 1980 / Ss-1</strain>
    </source>
</reference>
<accession>A7E4S9</accession>
<protein>
    <recommendedName>
        <fullName evidence="1">Acireductone dioxygenase</fullName>
    </recommendedName>
    <alternativeName>
        <fullName evidence="1">Acireductone dioxygenase (Fe(2+)-requiring)</fullName>
        <shortName evidence="1">ARD'</shortName>
        <shortName evidence="1">Fe-ARD</shortName>
        <ecNumber evidence="1">1.13.11.54</ecNumber>
    </alternativeName>
    <alternativeName>
        <fullName evidence="1">Acireductone dioxygenase (Ni(2+)-requiring)</fullName>
        <shortName evidence="1">ARD</shortName>
        <shortName evidence="1">Ni-ARD</shortName>
        <ecNumber evidence="1">1.13.11.53</ecNumber>
    </alternativeName>
</protein>
<name>MTND_SCLS1</name>
<sequence length="176" mass="20988">MRAYWFDNKEGDQRELHDSGRDVDPEYLEKLGVLYYHFADEKDVDKLASDRSYKNRDVITVSPQKMGDVYEEKVKMFFNEHLHEDEEIRYIRDGAGFFDVRSEGDEWVRIRLEKDDLIILPAGIYHRFTTDDKNYIQAMRLFKEEPKWTPLNRGPEVDANPYRKEYLQTVPAIASQ</sequence>
<gene>
    <name type="primary">adi1</name>
    <name type="ORF">SS1G_00301</name>
</gene>
<comment type="function">
    <text evidence="1">Catalyzes 2 different reactions between oxygen and the acireductone 1,2-dihydroxy-3-keto-5-methylthiopentene (DHK-MTPene) depending upon the metal bound in the active site. Fe-containing acireductone dioxygenase (Fe-ARD) produces formate and 2-keto-4-methylthiobutyrate (KMTB), the alpha-ketoacid precursor of methionine in the methionine recycle pathway. Ni-containing acireductone dioxygenase (Ni-ARD) produces methylthiopropionate, carbon monoxide and formate, and does not lie on the methionine recycle pathway.</text>
</comment>
<comment type="catalytic activity">
    <reaction evidence="1">
        <text>1,2-dihydroxy-5-(methylsulfanyl)pent-1-en-3-one + O2 = 4-methylsulfanyl-2-oxobutanoate + formate + 2 H(+)</text>
        <dbReference type="Rhea" id="RHEA:24504"/>
        <dbReference type="ChEBI" id="CHEBI:15378"/>
        <dbReference type="ChEBI" id="CHEBI:15379"/>
        <dbReference type="ChEBI" id="CHEBI:15740"/>
        <dbReference type="ChEBI" id="CHEBI:16723"/>
        <dbReference type="ChEBI" id="CHEBI:49252"/>
        <dbReference type="EC" id="1.13.11.54"/>
    </reaction>
</comment>
<comment type="catalytic activity">
    <reaction evidence="1">
        <text>1,2-dihydroxy-5-(methylsulfanyl)pent-1-en-3-one + O2 = 3-(methylsulfanyl)propanoate + CO + formate + 2 H(+)</text>
        <dbReference type="Rhea" id="RHEA:14161"/>
        <dbReference type="ChEBI" id="CHEBI:15378"/>
        <dbReference type="ChEBI" id="CHEBI:15379"/>
        <dbReference type="ChEBI" id="CHEBI:15740"/>
        <dbReference type="ChEBI" id="CHEBI:17245"/>
        <dbReference type="ChEBI" id="CHEBI:49016"/>
        <dbReference type="ChEBI" id="CHEBI:49252"/>
        <dbReference type="EC" id="1.13.11.53"/>
    </reaction>
</comment>
<comment type="cofactor">
    <cofactor evidence="1">
        <name>Fe(2+)</name>
        <dbReference type="ChEBI" id="CHEBI:29033"/>
    </cofactor>
    <cofactor evidence="1">
        <name>Ni(2+)</name>
        <dbReference type="ChEBI" id="CHEBI:49786"/>
    </cofactor>
    <text evidence="1">Binds either 1 Fe or Ni cation per monomer. Iron-binding promotes an acireductone dioxygenase reaction producing 2-keto-4-methylthiobutyrate, while nickel-binding promotes an acireductone dioxygenase reaction producing 3-(methylsulfanyl)propanoate.</text>
</comment>
<comment type="pathway">
    <text evidence="1">Amino-acid biosynthesis; L-methionine biosynthesis via salvage pathway; L-methionine from S-methyl-5-thio-alpha-D-ribose 1-phosphate: step 5/6.</text>
</comment>
<comment type="subcellular location">
    <subcellularLocation>
        <location evidence="1">Cytoplasm</location>
    </subcellularLocation>
    <subcellularLocation>
        <location evidence="1">Nucleus</location>
    </subcellularLocation>
</comment>
<comment type="similarity">
    <text evidence="1">Belongs to the acireductone dioxygenase (ARD) family.</text>
</comment>
<comment type="sequence caution" evidence="2">
    <conflict type="erroneous gene model prediction">
        <sequence resource="EMBL-CDS" id="EDN90901"/>
    </conflict>
</comment>
<proteinExistence type="inferred from homology"/>
<organism>
    <name type="scientific">Sclerotinia sclerotiorum (strain ATCC 18683 / 1980 / Ss-1)</name>
    <name type="common">White mold</name>
    <name type="synonym">Whetzelinia sclerotiorum</name>
    <dbReference type="NCBI Taxonomy" id="665079"/>
    <lineage>
        <taxon>Eukaryota</taxon>
        <taxon>Fungi</taxon>
        <taxon>Dikarya</taxon>
        <taxon>Ascomycota</taxon>
        <taxon>Pezizomycotina</taxon>
        <taxon>Leotiomycetes</taxon>
        <taxon>Helotiales</taxon>
        <taxon>Sclerotiniaceae</taxon>
        <taxon>Sclerotinia</taxon>
    </lineage>
</organism>
<keyword id="KW-0028">Amino-acid biosynthesis</keyword>
<keyword id="KW-0963">Cytoplasm</keyword>
<keyword id="KW-0223">Dioxygenase</keyword>
<keyword id="KW-0408">Iron</keyword>
<keyword id="KW-0479">Metal-binding</keyword>
<keyword id="KW-0486">Methionine biosynthesis</keyword>
<keyword id="KW-0533">Nickel</keyword>
<keyword id="KW-0539">Nucleus</keyword>
<keyword id="KW-0560">Oxidoreductase</keyword>
<keyword id="KW-1185">Reference proteome</keyword>
<dbReference type="EC" id="1.13.11.54" evidence="1"/>
<dbReference type="EC" id="1.13.11.53" evidence="1"/>
<dbReference type="EMBL" id="CH476621">
    <property type="protein sequence ID" value="EDN90901.1"/>
    <property type="status" value="ALT_SEQ"/>
    <property type="molecule type" value="Genomic_DNA"/>
</dbReference>
<dbReference type="RefSeq" id="XP_001598215.1">
    <property type="nucleotide sequence ID" value="XM_001598165.1"/>
</dbReference>
<dbReference type="FunCoup" id="A7E4S9">
    <property type="interactions" value="255"/>
</dbReference>
<dbReference type="STRING" id="665079.A7E4S9"/>
<dbReference type="GeneID" id="5494861"/>
<dbReference type="KEGG" id="ssl:SS1G_00301"/>
<dbReference type="VEuPathDB" id="FungiDB:sscle_03g028230"/>
<dbReference type="eggNOG" id="KOG2107">
    <property type="taxonomic scope" value="Eukaryota"/>
</dbReference>
<dbReference type="InParanoid" id="A7E4S9"/>
<dbReference type="OrthoDB" id="1867259at2759"/>
<dbReference type="UniPathway" id="UPA00904">
    <property type="reaction ID" value="UER00878"/>
</dbReference>
<dbReference type="Proteomes" id="UP000001312">
    <property type="component" value="Unassembled WGS sequence"/>
</dbReference>
<dbReference type="GO" id="GO:0005737">
    <property type="term" value="C:cytoplasm"/>
    <property type="evidence" value="ECO:0007669"/>
    <property type="project" value="UniProtKB-SubCell"/>
</dbReference>
<dbReference type="GO" id="GO:0005634">
    <property type="term" value="C:nucleus"/>
    <property type="evidence" value="ECO:0007669"/>
    <property type="project" value="UniProtKB-SubCell"/>
</dbReference>
<dbReference type="GO" id="GO:0010308">
    <property type="term" value="F:acireductone dioxygenase (Ni2+-requiring) activity"/>
    <property type="evidence" value="ECO:0007669"/>
    <property type="project" value="UniProtKB-UniRule"/>
</dbReference>
<dbReference type="GO" id="GO:0010309">
    <property type="term" value="F:acireductone dioxygenase [iron(II)-requiring] activity"/>
    <property type="evidence" value="ECO:0000318"/>
    <property type="project" value="GO_Central"/>
</dbReference>
<dbReference type="GO" id="GO:0005506">
    <property type="term" value="F:iron ion binding"/>
    <property type="evidence" value="ECO:0007669"/>
    <property type="project" value="UniProtKB-UniRule"/>
</dbReference>
<dbReference type="GO" id="GO:0016151">
    <property type="term" value="F:nickel cation binding"/>
    <property type="evidence" value="ECO:0007669"/>
    <property type="project" value="UniProtKB-UniRule"/>
</dbReference>
<dbReference type="GO" id="GO:0019509">
    <property type="term" value="P:L-methionine salvage from methylthioadenosine"/>
    <property type="evidence" value="ECO:0007669"/>
    <property type="project" value="UniProtKB-UniRule"/>
</dbReference>
<dbReference type="GO" id="GO:0006555">
    <property type="term" value="P:methionine metabolic process"/>
    <property type="evidence" value="ECO:0000318"/>
    <property type="project" value="GO_Central"/>
</dbReference>
<dbReference type="CDD" id="cd02232">
    <property type="entry name" value="cupin_ARD"/>
    <property type="match status" value="1"/>
</dbReference>
<dbReference type="FunFam" id="2.60.120.10:FF:000079">
    <property type="entry name" value="1,2-dihydroxy-3-keto-5-methylthiopentene dioxygenase"/>
    <property type="match status" value="1"/>
</dbReference>
<dbReference type="Gene3D" id="2.60.120.10">
    <property type="entry name" value="Jelly Rolls"/>
    <property type="match status" value="1"/>
</dbReference>
<dbReference type="HAMAP" id="MF_03154">
    <property type="entry name" value="Salvage_MtnD_euk"/>
    <property type="match status" value="1"/>
</dbReference>
<dbReference type="InterPro" id="IPR004313">
    <property type="entry name" value="ARD"/>
</dbReference>
<dbReference type="InterPro" id="IPR027496">
    <property type="entry name" value="ARD_euk"/>
</dbReference>
<dbReference type="InterPro" id="IPR014710">
    <property type="entry name" value="RmlC-like_jellyroll"/>
</dbReference>
<dbReference type="InterPro" id="IPR011051">
    <property type="entry name" value="RmlC_Cupin_sf"/>
</dbReference>
<dbReference type="PANTHER" id="PTHR23418">
    <property type="entry name" value="ACIREDUCTONE DIOXYGENASE"/>
    <property type="match status" value="1"/>
</dbReference>
<dbReference type="PANTHER" id="PTHR23418:SF0">
    <property type="entry name" value="ACIREDUCTONE DIOXYGENASE"/>
    <property type="match status" value="1"/>
</dbReference>
<dbReference type="Pfam" id="PF03079">
    <property type="entry name" value="ARD"/>
    <property type="match status" value="1"/>
</dbReference>
<dbReference type="SUPFAM" id="SSF51182">
    <property type="entry name" value="RmlC-like cupins"/>
    <property type="match status" value="1"/>
</dbReference>